<reference key="1">
    <citation type="journal article" date="2000" name="Nature">
        <title>The genome sequence of the thermoacidophilic scavenger Thermoplasma acidophilum.</title>
        <authorList>
            <person name="Ruepp A."/>
            <person name="Graml W."/>
            <person name="Santos-Martinez M.-L."/>
            <person name="Koretke K.K."/>
            <person name="Volker C."/>
            <person name="Mewes H.-W."/>
            <person name="Frishman D."/>
            <person name="Stocker S."/>
            <person name="Lupas A.N."/>
            <person name="Baumeister W."/>
        </authorList>
    </citation>
    <scope>NUCLEOTIDE SEQUENCE [LARGE SCALE GENOMIC DNA]</scope>
    <source>
        <strain>ATCC 25905 / DSM 1728 / JCM 9062 / NBRC 15155 / AMRC-C165</strain>
    </source>
</reference>
<name>CARA_THEAC</name>
<keyword id="KW-0028">Amino-acid biosynthesis</keyword>
<keyword id="KW-0055">Arginine biosynthesis</keyword>
<keyword id="KW-0067">ATP-binding</keyword>
<keyword id="KW-0315">Glutamine amidotransferase</keyword>
<keyword id="KW-0436">Ligase</keyword>
<keyword id="KW-0547">Nucleotide-binding</keyword>
<keyword id="KW-0665">Pyrimidine biosynthesis</keyword>
<keyword id="KW-1185">Reference proteome</keyword>
<proteinExistence type="inferred from homology"/>
<accession>Q9HK16</accession>
<sequence length="348" mass="38645">MKRYLITSDGTVIAGYGYGSPVTGYGELVFTTSMTGYLESMTDPSYVGQILVFASPTIANYELRKGVMESDRVKVSGIVTRDAHINMPAGTLGLDFDRFLRDEGIPAIDGVDTRLLVRKIRQGGVLRAYIADDPQGHSDFPDPMSENLVARAVDARGVKNIRGKGERRILFIDLGSKKTLRDMMLEHFSLIMASADSDLDAIDKYDAIFVSNGPGDPDHPSLRPVVNFLKRNIGVKPIFGICFGLQIIALAYGSKTYKMKFGHRGSNHAVTDGNRIYVTTHNHGYAVDPDTVRDFHVRERDINDGTIEMIEDGMMMAVQYHPEASPGPHDTRWFFSEMRRRTEDAAKG</sequence>
<comment type="function">
    <text evidence="1">Small subunit of the glutamine-dependent carbamoyl phosphate synthetase (CPSase). CPSase catalyzes the formation of carbamoyl phosphate from the ammonia moiety of glutamine, carbonate, and phosphate donated by ATP, constituting the first step of 2 biosynthetic pathways, one leading to arginine and/or urea and the other to pyrimidine nucleotides. The small subunit (glutamine amidotransferase) binds and cleaves glutamine to supply the large subunit with the substrate ammonia.</text>
</comment>
<comment type="catalytic activity">
    <reaction evidence="1">
        <text>hydrogencarbonate + L-glutamine + 2 ATP + H2O = carbamoyl phosphate + L-glutamate + 2 ADP + phosphate + 2 H(+)</text>
        <dbReference type="Rhea" id="RHEA:18633"/>
        <dbReference type="ChEBI" id="CHEBI:15377"/>
        <dbReference type="ChEBI" id="CHEBI:15378"/>
        <dbReference type="ChEBI" id="CHEBI:17544"/>
        <dbReference type="ChEBI" id="CHEBI:29985"/>
        <dbReference type="ChEBI" id="CHEBI:30616"/>
        <dbReference type="ChEBI" id="CHEBI:43474"/>
        <dbReference type="ChEBI" id="CHEBI:58228"/>
        <dbReference type="ChEBI" id="CHEBI:58359"/>
        <dbReference type="ChEBI" id="CHEBI:456216"/>
        <dbReference type="EC" id="6.3.5.5"/>
    </reaction>
</comment>
<comment type="catalytic activity">
    <molecule>Carbamoyl phosphate synthase small chain</molecule>
    <reaction evidence="1">
        <text>L-glutamine + H2O = L-glutamate + NH4(+)</text>
        <dbReference type="Rhea" id="RHEA:15889"/>
        <dbReference type="ChEBI" id="CHEBI:15377"/>
        <dbReference type="ChEBI" id="CHEBI:28938"/>
        <dbReference type="ChEBI" id="CHEBI:29985"/>
        <dbReference type="ChEBI" id="CHEBI:58359"/>
    </reaction>
</comment>
<comment type="pathway">
    <text evidence="1">Amino-acid biosynthesis; L-arginine biosynthesis; carbamoyl phosphate from bicarbonate: step 1/1.</text>
</comment>
<comment type="pathway">
    <text evidence="1">Pyrimidine metabolism; UMP biosynthesis via de novo pathway; (S)-dihydroorotate from bicarbonate: step 1/3.</text>
</comment>
<comment type="subunit">
    <text evidence="1">Composed of two chains; the small (or glutamine) chain promotes the hydrolysis of glutamine to ammonia, which is used by the large (or ammonia) chain to synthesize carbamoyl phosphate. Tetramer of heterodimers (alpha,beta)4.</text>
</comment>
<comment type="similarity">
    <text evidence="1">Belongs to the CarA family.</text>
</comment>
<comment type="sequence caution" evidence="2">
    <conflict type="erroneous initiation">
        <sequence resource="EMBL-CDS" id="CAC11923"/>
    </conflict>
</comment>
<evidence type="ECO:0000255" key="1">
    <source>
        <dbReference type="HAMAP-Rule" id="MF_01209"/>
    </source>
</evidence>
<evidence type="ECO:0000305" key="2"/>
<gene>
    <name evidence="1" type="primary">carA</name>
    <name type="ordered locus">Ta0792</name>
</gene>
<protein>
    <recommendedName>
        <fullName evidence="1">Carbamoyl phosphate synthase small chain</fullName>
        <ecNumber evidence="1">6.3.5.5</ecNumber>
    </recommendedName>
    <alternativeName>
        <fullName evidence="1">Carbamoyl phosphate synthetase glutamine chain</fullName>
    </alternativeName>
</protein>
<feature type="chain" id="PRO_0000112367" description="Carbamoyl phosphate synthase small chain">
    <location>
        <begin position="1"/>
        <end position="348"/>
    </location>
</feature>
<feature type="domain" description="Glutamine amidotransferase type-1" evidence="1">
    <location>
        <begin position="168"/>
        <end position="348"/>
    </location>
</feature>
<feature type="region of interest" description="CPSase" evidence="1">
    <location>
        <begin position="1"/>
        <end position="167"/>
    </location>
</feature>
<feature type="active site" description="Nucleophile" evidence="1">
    <location>
        <position position="242"/>
    </location>
</feature>
<feature type="active site" evidence="1">
    <location>
        <position position="321"/>
    </location>
</feature>
<feature type="active site" evidence="1">
    <location>
        <position position="323"/>
    </location>
</feature>
<feature type="binding site" evidence="1">
    <location>
        <position position="45"/>
    </location>
    <ligand>
        <name>L-glutamine</name>
        <dbReference type="ChEBI" id="CHEBI:58359"/>
    </ligand>
</feature>
<feature type="binding site" evidence="1">
    <location>
        <position position="213"/>
    </location>
    <ligand>
        <name>L-glutamine</name>
        <dbReference type="ChEBI" id="CHEBI:58359"/>
    </ligand>
</feature>
<feature type="binding site" evidence="1">
    <location>
        <position position="215"/>
    </location>
    <ligand>
        <name>L-glutamine</name>
        <dbReference type="ChEBI" id="CHEBI:58359"/>
    </ligand>
</feature>
<feature type="binding site" evidence="1">
    <location>
        <position position="243"/>
    </location>
    <ligand>
        <name>L-glutamine</name>
        <dbReference type="ChEBI" id="CHEBI:58359"/>
    </ligand>
</feature>
<feature type="binding site" evidence="1">
    <location>
        <position position="246"/>
    </location>
    <ligand>
        <name>L-glutamine</name>
        <dbReference type="ChEBI" id="CHEBI:58359"/>
    </ligand>
</feature>
<feature type="binding site" evidence="1">
    <location>
        <position position="282"/>
    </location>
    <ligand>
        <name>L-glutamine</name>
        <dbReference type="ChEBI" id="CHEBI:58359"/>
    </ligand>
</feature>
<feature type="binding site" evidence="1">
    <location>
        <position position="284"/>
    </location>
    <ligand>
        <name>L-glutamine</name>
        <dbReference type="ChEBI" id="CHEBI:58359"/>
    </ligand>
</feature>
<feature type="binding site" evidence="1">
    <location>
        <position position="285"/>
    </location>
    <ligand>
        <name>L-glutamine</name>
        <dbReference type="ChEBI" id="CHEBI:58359"/>
    </ligand>
</feature>
<organism>
    <name type="scientific">Thermoplasma acidophilum (strain ATCC 25905 / DSM 1728 / JCM 9062 / NBRC 15155 / AMRC-C165)</name>
    <dbReference type="NCBI Taxonomy" id="273075"/>
    <lineage>
        <taxon>Archaea</taxon>
        <taxon>Methanobacteriati</taxon>
        <taxon>Thermoplasmatota</taxon>
        <taxon>Thermoplasmata</taxon>
        <taxon>Thermoplasmatales</taxon>
        <taxon>Thermoplasmataceae</taxon>
        <taxon>Thermoplasma</taxon>
    </lineage>
</organism>
<dbReference type="EC" id="6.3.5.5" evidence="1"/>
<dbReference type="EMBL" id="AL445065">
    <property type="protein sequence ID" value="CAC11923.1"/>
    <property type="status" value="ALT_INIT"/>
    <property type="molecule type" value="Genomic_DNA"/>
</dbReference>
<dbReference type="SMR" id="Q9HK16"/>
<dbReference type="FunCoup" id="Q9HK16">
    <property type="interactions" value="183"/>
</dbReference>
<dbReference type="STRING" id="273075.gene:9572007"/>
<dbReference type="PaxDb" id="273075-Ta0792m"/>
<dbReference type="EnsemblBacteria" id="CAC11923">
    <property type="protein sequence ID" value="CAC11923"/>
    <property type="gene ID" value="CAC11923"/>
</dbReference>
<dbReference type="KEGG" id="tac:Ta0792"/>
<dbReference type="eggNOG" id="arCOG00064">
    <property type="taxonomic scope" value="Archaea"/>
</dbReference>
<dbReference type="HOGENOM" id="CLU_035901_2_1_2"/>
<dbReference type="InParanoid" id="Q9HK16"/>
<dbReference type="OrthoDB" id="7675at2157"/>
<dbReference type="UniPathway" id="UPA00068">
    <property type="reaction ID" value="UER00171"/>
</dbReference>
<dbReference type="UniPathway" id="UPA00070">
    <property type="reaction ID" value="UER00115"/>
</dbReference>
<dbReference type="Proteomes" id="UP000001024">
    <property type="component" value="Chromosome"/>
</dbReference>
<dbReference type="GO" id="GO:0005524">
    <property type="term" value="F:ATP binding"/>
    <property type="evidence" value="ECO:0007669"/>
    <property type="project" value="UniProtKB-UniRule"/>
</dbReference>
<dbReference type="GO" id="GO:0004088">
    <property type="term" value="F:carbamoyl-phosphate synthase (glutamine-hydrolyzing) activity"/>
    <property type="evidence" value="ECO:0007669"/>
    <property type="project" value="UniProtKB-UniRule"/>
</dbReference>
<dbReference type="GO" id="GO:0004359">
    <property type="term" value="F:glutaminase activity"/>
    <property type="evidence" value="ECO:0007669"/>
    <property type="project" value="RHEA"/>
</dbReference>
<dbReference type="GO" id="GO:0006207">
    <property type="term" value="P:'de novo' pyrimidine nucleobase biosynthetic process"/>
    <property type="evidence" value="ECO:0007669"/>
    <property type="project" value="InterPro"/>
</dbReference>
<dbReference type="GO" id="GO:0044205">
    <property type="term" value="P:'de novo' UMP biosynthetic process"/>
    <property type="evidence" value="ECO:0007669"/>
    <property type="project" value="UniProtKB-UniRule"/>
</dbReference>
<dbReference type="GO" id="GO:0006541">
    <property type="term" value="P:glutamine metabolic process"/>
    <property type="evidence" value="ECO:0007669"/>
    <property type="project" value="InterPro"/>
</dbReference>
<dbReference type="GO" id="GO:0006526">
    <property type="term" value="P:L-arginine biosynthetic process"/>
    <property type="evidence" value="ECO:0007669"/>
    <property type="project" value="UniProtKB-UniRule"/>
</dbReference>
<dbReference type="CDD" id="cd01744">
    <property type="entry name" value="GATase1_CPSase"/>
    <property type="match status" value="1"/>
</dbReference>
<dbReference type="Gene3D" id="3.40.50.880">
    <property type="match status" value="1"/>
</dbReference>
<dbReference type="Gene3D" id="3.50.30.20">
    <property type="entry name" value="Carbamoyl-phosphate synthase small subunit, N-terminal domain"/>
    <property type="match status" value="1"/>
</dbReference>
<dbReference type="HAMAP" id="MF_01209">
    <property type="entry name" value="CPSase_S_chain"/>
    <property type="match status" value="1"/>
</dbReference>
<dbReference type="InterPro" id="IPR050472">
    <property type="entry name" value="Anth_synth/Amidotransfase"/>
</dbReference>
<dbReference type="InterPro" id="IPR006274">
    <property type="entry name" value="CarbamoylP_synth_ssu"/>
</dbReference>
<dbReference type="InterPro" id="IPR002474">
    <property type="entry name" value="CarbamoylP_synth_ssu_N"/>
</dbReference>
<dbReference type="InterPro" id="IPR036480">
    <property type="entry name" value="CarbP_synth_ssu_N_sf"/>
</dbReference>
<dbReference type="InterPro" id="IPR029062">
    <property type="entry name" value="Class_I_gatase-like"/>
</dbReference>
<dbReference type="InterPro" id="IPR035686">
    <property type="entry name" value="CPSase_GATase1"/>
</dbReference>
<dbReference type="InterPro" id="IPR017926">
    <property type="entry name" value="GATASE"/>
</dbReference>
<dbReference type="NCBIfam" id="TIGR01368">
    <property type="entry name" value="CPSaseIIsmall"/>
    <property type="match status" value="1"/>
</dbReference>
<dbReference type="NCBIfam" id="NF009475">
    <property type="entry name" value="PRK12838.1"/>
    <property type="match status" value="1"/>
</dbReference>
<dbReference type="PANTHER" id="PTHR43418:SF7">
    <property type="entry name" value="CARBAMOYL-PHOSPHATE SYNTHASE SMALL CHAIN"/>
    <property type="match status" value="1"/>
</dbReference>
<dbReference type="PANTHER" id="PTHR43418">
    <property type="entry name" value="MULTIFUNCTIONAL TRYPTOPHAN BIOSYNTHESIS PROTEIN-RELATED"/>
    <property type="match status" value="1"/>
</dbReference>
<dbReference type="Pfam" id="PF00988">
    <property type="entry name" value="CPSase_sm_chain"/>
    <property type="match status" value="1"/>
</dbReference>
<dbReference type="Pfam" id="PF00117">
    <property type="entry name" value="GATase"/>
    <property type="match status" value="1"/>
</dbReference>
<dbReference type="PRINTS" id="PR00097">
    <property type="entry name" value="ANTSNTHASEII"/>
</dbReference>
<dbReference type="PRINTS" id="PR00099">
    <property type="entry name" value="CPSGATASE"/>
</dbReference>
<dbReference type="PRINTS" id="PR00096">
    <property type="entry name" value="GATASE"/>
</dbReference>
<dbReference type="SMART" id="SM01097">
    <property type="entry name" value="CPSase_sm_chain"/>
    <property type="match status" value="1"/>
</dbReference>
<dbReference type="SUPFAM" id="SSF52021">
    <property type="entry name" value="Carbamoyl phosphate synthetase, small subunit N-terminal domain"/>
    <property type="match status" value="1"/>
</dbReference>
<dbReference type="SUPFAM" id="SSF52317">
    <property type="entry name" value="Class I glutamine amidotransferase-like"/>
    <property type="match status" value="1"/>
</dbReference>
<dbReference type="PROSITE" id="PS51273">
    <property type="entry name" value="GATASE_TYPE_1"/>
    <property type="match status" value="1"/>
</dbReference>